<proteinExistence type="inferred from homology"/>
<accession>Q92RJ3</accession>
<evidence type="ECO:0000250" key="1"/>
<evidence type="ECO:0000255" key="2">
    <source>
        <dbReference type="PROSITE-ProRule" id="PRU00208"/>
    </source>
</evidence>
<evidence type="ECO:0000255" key="3">
    <source>
        <dbReference type="PROSITE-ProRule" id="PRU01024"/>
    </source>
</evidence>
<keyword id="KW-0004">4Fe-4S</keyword>
<keyword id="KW-0408">Iron</keyword>
<keyword id="KW-0411">Iron-sulfur</keyword>
<keyword id="KW-0479">Metal-binding</keyword>
<keyword id="KW-0489">Methyltransferase</keyword>
<keyword id="KW-1185">Reference proteome</keyword>
<keyword id="KW-0949">S-adenosyl-L-methionine</keyword>
<keyword id="KW-0808">Transferase</keyword>
<comment type="similarity">
    <text evidence="3">Belongs to the class I-like SAM-binding methyltransferase superfamily. RNA M5U methyltransferase family.</text>
</comment>
<reference key="1">
    <citation type="journal article" date="2001" name="Proc. Natl. Acad. Sci. U.S.A.">
        <title>Analysis of the chromosome sequence of the legume symbiont Sinorhizobium meliloti strain 1021.</title>
        <authorList>
            <person name="Capela D."/>
            <person name="Barloy-Hubler F."/>
            <person name="Gouzy J."/>
            <person name="Bothe G."/>
            <person name="Ampe F."/>
            <person name="Batut J."/>
            <person name="Boistard P."/>
            <person name="Becker A."/>
            <person name="Boutry M."/>
            <person name="Cadieu E."/>
            <person name="Dreano S."/>
            <person name="Gloux S."/>
            <person name="Godrie T."/>
            <person name="Goffeau A."/>
            <person name="Kahn D."/>
            <person name="Kiss E."/>
            <person name="Lelaure V."/>
            <person name="Masuy D."/>
            <person name="Pohl T."/>
            <person name="Portetelle D."/>
            <person name="Puehler A."/>
            <person name="Purnelle B."/>
            <person name="Ramsperger U."/>
            <person name="Renard C."/>
            <person name="Thebault P."/>
            <person name="Vandenbol M."/>
            <person name="Weidner S."/>
            <person name="Galibert F."/>
        </authorList>
    </citation>
    <scope>NUCLEOTIDE SEQUENCE [LARGE SCALE GENOMIC DNA]</scope>
    <source>
        <strain>1021</strain>
    </source>
</reference>
<reference key="2">
    <citation type="journal article" date="2001" name="Science">
        <title>The composite genome of the legume symbiont Sinorhizobium meliloti.</title>
        <authorList>
            <person name="Galibert F."/>
            <person name="Finan T.M."/>
            <person name="Long S.R."/>
            <person name="Puehler A."/>
            <person name="Abola P."/>
            <person name="Ampe F."/>
            <person name="Barloy-Hubler F."/>
            <person name="Barnett M.J."/>
            <person name="Becker A."/>
            <person name="Boistard P."/>
            <person name="Bothe G."/>
            <person name="Boutry M."/>
            <person name="Bowser L."/>
            <person name="Buhrmester J."/>
            <person name="Cadieu E."/>
            <person name="Capela D."/>
            <person name="Chain P."/>
            <person name="Cowie A."/>
            <person name="Davis R.W."/>
            <person name="Dreano S."/>
            <person name="Federspiel N.A."/>
            <person name="Fisher R.F."/>
            <person name="Gloux S."/>
            <person name="Godrie T."/>
            <person name="Goffeau A."/>
            <person name="Golding B."/>
            <person name="Gouzy J."/>
            <person name="Gurjal M."/>
            <person name="Hernandez-Lucas I."/>
            <person name="Hong A."/>
            <person name="Huizar L."/>
            <person name="Hyman R.W."/>
            <person name="Jones T."/>
            <person name="Kahn D."/>
            <person name="Kahn M.L."/>
            <person name="Kalman S."/>
            <person name="Keating D.H."/>
            <person name="Kiss E."/>
            <person name="Komp C."/>
            <person name="Lelaure V."/>
            <person name="Masuy D."/>
            <person name="Palm C."/>
            <person name="Peck M.C."/>
            <person name="Pohl T.M."/>
            <person name="Portetelle D."/>
            <person name="Purnelle B."/>
            <person name="Ramsperger U."/>
            <person name="Surzycki R."/>
            <person name="Thebault P."/>
            <person name="Vandenbol M."/>
            <person name="Vorhoelter F.J."/>
            <person name="Weidner S."/>
            <person name="Wells D.H."/>
            <person name="Wong K."/>
            <person name="Yeh K.-C."/>
            <person name="Batut J."/>
        </authorList>
    </citation>
    <scope>NUCLEOTIDE SEQUENCE [LARGE SCALE GENOMIC DNA]</scope>
    <source>
        <strain>1021</strain>
    </source>
</reference>
<name>Y878_RHIME</name>
<sequence>MSTGTVTIDRLGAQGDGVARTEAGPVFAPFTLPGETVSLAVNKANGTLISLKEASPERVEPPCRHFGPDGVNGTCGGCTLQHASDALYHAFKRNLVIDALRSKGLTPEVGALIIARPGDRRRAAFTARRTEKELLLGYNQMQSHHIVSIGECPITSPGIVSRLATIRKIAAAMASSAEPFRITVLETDTGLDLAFEGLKLSDPQRRSAVDAVLGERGIARVSLNGEIVVEPLKPAIDFDGVTVSPPPGAFTQATRPAEDAMAKLVLAHVGKAKRVADLFAGIGTFALRIARTARVHAVEGDDRAVKALDFAARNTQGLKPVTAEKRDLFRRPMMAQELKAFDAVVFDPPRAGAETQCHELARSGVKKIAAVSCNPVTLARDLSILTAAGYRITGVTPIDQFLWSAHVETVATLEK</sequence>
<protein>
    <recommendedName>
        <fullName>Uncharacterized RNA methyltransferase R00878</fullName>
        <ecNumber>2.1.1.-</ecNumber>
    </recommendedName>
</protein>
<gene>
    <name type="ordered locus">R00878</name>
    <name type="ORF">SMc00974</name>
</gene>
<feature type="chain" id="PRO_0000162013" description="Uncharacterized RNA methyltransferase R00878">
    <location>
        <begin position="1"/>
        <end position="415"/>
    </location>
</feature>
<feature type="domain" description="TRAM" evidence="2">
    <location>
        <begin position="1"/>
        <end position="55"/>
    </location>
</feature>
<feature type="active site" description="Nucleophile" evidence="3">
    <location>
        <position position="373"/>
    </location>
</feature>
<feature type="binding site" evidence="1">
    <location>
        <position position="63"/>
    </location>
    <ligand>
        <name>[4Fe-4S] cluster</name>
        <dbReference type="ChEBI" id="CHEBI:49883"/>
    </ligand>
</feature>
<feature type="binding site" evidence="1">
    <location>
        <position position="75"/>
    </location>
    <ligand>
        <name>[4Fe-4S] cluster</name>
        <dbReference type="ChEBI" id="CHEBI:49883"/>
    </ligand>
</feature>
<feature type="binding site" evidence="1">
    <location>
        <position position="78"/>
    </location>
    <ligand>
        <name>[4Fe-4S] cluster</name>
        <dbReference type="ChEBI" id="CHEBI:49883"/>
    </ligand>
</feature>
<feature type="binding site" evidence="1">
    <location>
        <position position="152"/>
    </location>
    <ligand>
        <name>[4Fe-4S] cluster</name>
        <dbReference type="ChEBI" id="CHEBI:49883"/>
    </ligand>
</feature>
<feature type="binding site" evidence="3">
    <location>
        <position position="252"/>
    </location>
    <ligand>
        <name>S-adenosyl-L-methionine</name>
        <dbReference type="ChEBI" id="CHEBI:59789"/>
    </ligand>
</feature>
<feature type="binding site" evidence="3">
    <location>
        <position position="279"/>
    </location>
    <ligand>
        <name>S-adenosyl-L-methionine</name>
        <dbReference type="ChEBI" id="CHEBI:59789"/>
    </ligand>
</feature>
<feature type="binding site" evidence="3">
    <location>
        <position position="299"/>
    </location>
    <ligand>
        <name>S-adenosyl-L-methionine</name>
        <dbReference type="ChEBI" id="CHEBI:59789"/>
    </ligand>
</feature>
<feature type="binding site" evidence="3">
    <location>
        <position position="347"/>
    </location>
    <ligand>
        <name>S-adenosyl-L-methionine</name>
        <dbReference type="ChEBI" id="CHEBI:59789"/>
    </ligand>
</feature>
<organism>
    <name type="scientific">Rhizobium meliloti (strain 1021)</name>
    <name type="common">Ensifer meliloti</name>
    <name type="synonym">Sinorhizobium meliloti</name>
    <dbReference type="NCBI Taxonomy" id="266834"/>
    <lineage>
        <taxon>Bacteria</taxon>
        <taxon>Pseudomonadati</taxon>
        <taxon>Pseudomonadota</taxon>
        <taxon>Alphaproteobacteria</taxon>
        <taxon>Hyphomicrobiales</taxon>
        <taxon>Rhizobiaceae</taxon>
        <taxon>Sinorhizobium/Ensifer group</taxon>
        <taxon>Sinorhizobium</taxon>
    </lineage>
</organism>
<dbReference type="EC" id="2.1.1.-"/>
<dbReference type="EMBL" id="AL591688">
    <property type="protein sequence ID" value="CAC45450.1"/>
    <property type="molecule type" value="Genomic_DNA"/>
</dbReference>
<dbReference type="RefSeq" id="NP_384984.1">
    <property type="nucleotide sequence ID" value="NC_003047.1"/>
</dbReference>
<dbReference type="RefSeq" id="WP_010968887.1">
    <property type="nucleotide sequence ID" value="NC_003047.1"/>
</dbReference>
<dbReference type="SMR" id="Q92RJ3"/>
<dbReference type="EnsemblBacteria" id="CAC45450">
    <property type="protein sequence ID" value="CAC45450"/>
    <property type="gene ID" value="SMc00974"/>
</dbReference>
<dbReference type="KEGG" id="sme:SMc00974"/>
<dbReference type="PATRIC" id="fig|266834.11.peg.2273"/>
<dbReference type="eggNOG" id="COG2265">
    <property type="taxonomic scope" value="Bacteria"/>
</dbReference>
<dbReference type="HOGENOM" id="CLU_014689_8_0_5"/>
<dbReference type="OrthoDB" id="9804590at2"/>
<dbReference type="Proteomes" id="UP000001976">
    <property type="component" value="Chromosome"/>
</dbReference>
<dbReference type="GO" id="GO:0051539">
    <property type="term" value="F:4 iron, 4 sulfur cluster binding"/>
    <property type="evidence" value="ECO:0007669"/>
    <property type="project" value="UniProtKB-KW"/>
</dbReference>
<dbReference type="GO" id="GO:0046872">
    <property type="term" value="F:metal ion binding"/>
    <property type="evidence" value="ECO:0007669"/>
    <property type="project" value="UniProtKB-KW"/>
</dbReference>
<dbReference type="GO" id="GO:0070041">
    <property type="term" value="F:rRNA (uridine-C5-)-methyltransferase activity"/>
    <property type="evidence" value="ECO:0007669"/>
    <property type="project" value="TreeGrafter"/>
</dbReference>
<dbReference type="GO" id="GO:0070475">
    <property type="term" value="P:rRNA base methylation"/>
    <property type="evidence" value="ECO:0007669"/>
    <property type="project" value="TreeGrafter"/>
</dbReference>
<dbReference type="CDD" id="cd02440">
    <property type="entry name" value="AdoMet_MTases"/>
    <property type="match status" value="1"/>
</dbReference>
<dbReference type="Gene3D" id="2.40.50.1070">
    <property type="match status" value="1"/>
</dbReference>
<dbReference type="Gene3D" id="2.40.50.140">
    <property type="entry name" value="Nucleic acid-binding proteins"/>
    <property type="match status" value="1"/>
</dbReference>
<dbReference type="Gene3D" id="3.40.50.150">
    <property type="entry name" value="Vaccinia Virus protein VP39"/>
    <property type="match status" value="1"/>
</dbReference>
<dbReference type="InterPro" id="IPR030390">
    <property type="entry name" value="MeTrfase_TrmA_AS"/>
</dbReference>
<dbReference type="InterPro" id="IPR012340">
    <property type="entry name" value="NA-bd_OB-fold"/>
</dbReference>
<dbReference type="InterPro" id="IPR029063">
    <property type="entry name" value="SAM-dependent_MTases_sf"/>
</dbReference>
<dbReference type="InterPro" id="IPR002792">
    <property type="entry name" value="TRAM_dom"/>
</dbReference>
<dbReference type="InterPro" id="IPR010280">
    <property type="entry name" value="U5_MeTrfase_fam"/>
</dbReference>
<dbReference type="PANTHER" id="PTHR11061:SF49">
    <property type="entry name" value="23S RRNA (URACIL(1939)-C(5))-METHYLTRANSFERASE RLMD"/>
    <property type="match status" value="1"/>
</dbReference>
<dbReference type="PANTHER" id="PTHR11061">
    <property type="entry name" value="RNA M5U METHYLTRANSFERASE"/>
    <property type="match status" value="1"/>
</dbReference>
<dbReference type="Pfam" id="PF01938">
    <property type="entry name" value="TRAM"/>
    <property type="match status" value="1"/>
</dbReference>
<dbReference type="Pfam" id="PF05958">
    <property type="entry name" value="tRNA_U5-meth_tr"/>
    <property type="match status" value="1"/>
</dbReference>
<dbReference type="SUPFAM" id="SSF50249">
    <property type="entry name" value="Nucleic acid-binding proteins"/>
    <property type="match status" value="1"/>
</dbReference>
<dbReference type="SUPFAM" id="SSF53335">
    <property type="entry name" value="S-adenosyl-L-methionine-dependent methyltransferases"/>
    <property type="match status" value="1"/>
</dbReference>
<dbReference type="PROSITE" id="PS51687">
    <property type="entry name" value="SAM_MT_RNA_M5U"/>
    <property type="match status" value="1"/>
</dbReference>
<dbReference type="PROSITE" id="PS50926">
    <property type="entry name" value="TRAM"/>
    <property type="match status" value="1"/>
</dbReference>
<dbReference type="PROSITE" id="PS01230">
    <property type="entry name" value="TRMA_1"/>
    <property type="match status" value="1"/>
</dbReference>